<sequence>MPSSGPGDTSISSLEREDDRKEGEEQEENRGKEERQEPSATARKVGRPGRKRKHPPVESSDTPKDPAVTTKSQPTAQDSGPSDLLPNGDLEKRSEPQPEEGSPAAGQKGGAPAEGEGTETPPEASRAVENGCCVTKEGRGASAGEGKEQKQTNIESMKMEGSRGRLRGGLGWESSLRQRPMPRLTFQAGDPYYISKRKRDEWLARWKREAEKKAKVIAVMNAVEESQASGESQKVEEASPPAVQQPTDPASPTVATTPEPVGADAGDKNATKAADDEPEYEDGRGFGIGELVWGKLRGFSWWPGRIVSWWMTGRSRAAEGTRWVMWFGDGKFSVVCVEKLMPLSSFCSAFHQATYNKQPMYRKAIYEVLQVASSRAGKLFPACHDSDESDTGKAVEVQNKQMIEWALGGFQPSGPKGLEPPEEEKNPYKEVYTDMWVEPEAAAYAPPPPAKKPRKSTTEKPKVKEIIDERTRERLVYEVRQKCRNIEDICISCGSLNVTLEHPLFIGGMCQNCKNCFLECAYQYDDDGYQSYCTICCGGREVLMCGNNNCCRCFCVECVDLLVGPGAAQAAIKEDPWNCYMCGHKGTYGLLRRREDWPSRLQMFFANNHDQEFDPPKVYPPVPAEKRKPIRVLSLFDGIATGLLVLKDLGIQVDRYIASEVCEDSITVGMVRHQGKIMYVGDVRSVTQKHIQEWGPFDLVIGGSPCNDLSIVNPARKGLYEGTGRLFFEFYRLLHDARPKEGDDRPFFWLFENVVAMGVSDKRDISRFLESNPVMIDAKEVSAAHRARYFWGNLPGMNRPLASTVNDKLELQECLEHGRIAKFSKVRTITTRSNSIKQGKDQHFPVFMNEKEDILWCTEMERVFGFPVHYTDVSNMSRLARQRLLGRSWSVPVIRHLFAPLKEYFACV</sequence>
<reference key="1">
    <citation type="journal article" date="2004" name="Genomics">
        <title>Identification of 11 pseudogenes in the DNA methyltransferase gene family in rodents and humans and implications for the functional loci.</title>
        <authorList>
            <person name="Lees-Murdock D.J."/>
            <person name="McLoughlin G.A."/>
            <person name="McDaid J.R."/>
            <person name="Quinn L.M."/>
            <person name="O'Doherty A."/>
            <person name="Hiripi L."/>
            <person name="Hack C.J."/>
            <person name="Walsh C.P."/>
        </authorList>
    </citation>
    <scope>NUCLEOTIDE SEQUENCE [MRNA] (ISOFORMS 1 AND 2)</scope>
</reference>
<reference key="2">
    <citation type="journal article" date="2012" name="Nat. Commun.">
        <title>Quantitative maps of protein phosphorylation sites across 14 different rat organs and tissues.</title>
        <authorList>
            <person name="Lundby A."/>
            <person name="Secher A."/>
            <person name="Lage K."/>
            <person name="Nordsborg N.B."/>
            <person name="Dmytriyev A."/>
            <person name="Lundby C."/>
            <person name="Olsen J.V."/>
        </authorList>
    </citation>
    <scope>PHOSPHORYLATION [LARGE SCALE ANALYSIS] AT SER-102; THR-120; SER-239 AND SER-251</scope>
    <scope>IDENTIFICATION BY MASS SPECTROMETRY [LARGE SCALE ANALYSIS]</scope>
</reference>
<protein>
    <recommendedName>
        <fullName>DNA (cytosine-5)-methyltransferase 3A</fullName>
        <shortName>Dnmt3a</shortName>
        <ecNumber evidence="2">2.1.1.37</ecNumber>
    </recommendedName>
    <alternativeName>
        <fullName evidence="10">Cysteine methyltransferase DNMT3A</fullName>
        <ecNumber evidence="2">2.1.1.-</ecNumber>
    </alternativeName>
</protein>
<dbReference type="EC" id="2.1.1.37" evidence="2"/>
<dbReference type="EC" id="2.1.1.-" evidence="2"/>
<dbReference type="EMBL" id="BN000395">
    <property type="protein sequence ID" value="CAE52317.1"/>
    <property type="molecule type" value="mRNA"/>
</dbReference>
<dbReference type="EMBL" id="BN000396">
    <property type="protein sequence ID" value="CAE52318.1"/>
    <property type="molecule type" value="mRNA"/>
</dbReference>
<dbReference type="RefSeq" id="NP_001003957.1">
    <molecule id="Q1LZ53-2"/>
    <property type="nucleotide sequence ID" value="NM_001003957.1"/>
</dbReference>
<dbReference type="RefSeq" id="NP_001003958.1">
    <molecule id="Q1LZ53-1"/>
    <property type="nucleotide sequence ID" value="NM_001003958.1"/>
</dbReference>
<dbReference type="RefSeq" id="XP_017449755.1">
    <property type="nucleotide sequence ID" value="XM_017594266.1"/>
</dbReference>
<dbReference type="RefSeq" id="XP_017449756.1">
    <molecule id="Q1LZ53-1"/>
    <property type="nucleotide sequence ID" value="XM_017594267.3"/>
</dbReference>
<dbReference type="RefSeq" id="XP_017449757.1">
    <molecule id="Q1LZ53-1"/>
    <property type="nucleotide sequence ID" value="XM_017594268.3"/>
</dbReference>
<dbReference type="RefSeq" id="XP_038968589.1">
    <molecule id="Q1LZ53-1"/>
    <property type="nucleotide sequence ID" value="XM_039112661.2"/>
</dbReference>
<dbReference type="RefSeq" id="XP_038968590.1">
    <molecule id="Q1LZ53-1"/>
    <property type="nucleotide sequence ID" value="XM_039112662.2"/>
</dbReference>
<dbReference type="RefSeq" id="XP_038968591.1">
    <molecule id="Q1LZ53-1"/>
    <property type="nucleotide sequence ID" value="XM_039112663.2"/>
</dbReference>
<dbReference type="RefSeq" id="XP_038968592.1">
    <molecule id="Q1LZ53-1"/>
    <property type="nucleotide sequence ID" value="XM_039112664.1"/>
</dbReference>
<dbReference type="RefSeq" id="XP_038968596.1">
    <molecule id="Q1LZ53-2"/>
    <property type="nucleotide sequence ID" value="XM_039112668.2"/>
</dbReference>
<dbReference type="SMR" id="Q1LZ53"/>
<dbReference type="FunCoup" id="Q1LZ53">
    <property type="interactions" value="2056"/>
</dbReference>
<dbReference type="STRING" id="10116.ENSRNOP00000046524"/>
<dbReference type="iPTMnet" id="Q1LZ53"/>
<dbReference type="PhosphoSitePlus" id="Q1LZ53"/>
<dbReference type="PaxDb" id="10116-ENSRNOP00000046524"/>
<dbReference type="Ensembl" id="ENSRNOT00000047210.4">
    <molecule id="Q1LZ53-1"/>
    <property type="protein sequence ID" value="ENSRNOP00000046524.2"/>
    <property type="gene ID" value="ENSRNOG00000026649.7"/>
</dbReference>
<dbReference type="GeneID" id="444984"/>
<dbReference type="KEGG" id="rno:444984"/>
<dbReference type="AGR" id="RGD:1303336"/>
<dbReference type="CTD" id="1788"/>
<dbReference type="RGD" id="1303336">
    <property type="gene designation" value="Dnmt3a"/>
</dbReference>
<dbReference type="eggNOG" id="ENOG502QR6U">
    <property type="taxonomic scope" value="Eukaryota"/>
</dbReference>
<dbReference type="GeneTree" id="ENSGT00940000155459"/>
<dbReference type="InParanoid" id="Q1LZ53"/>
<dbReference type="OMA" id="HGRMAKF"/>
<dbReference type="OrthoDB" id="641149at2759"/>
<dbReference type="PhylomeDB" id="Q1LZ53"/>
<dbReference type="TreeFam" id="TF329039"/>
<dbReference type="Reactome" id="R-RNO-212300">
    <property type="pathway name" value="PRC2 methylates histones and DNA"/>
</dbReference>
<dbReference type="Reactome" id="R-RNO-3214858">
    <property type="pathway name" value="RMTs methylate histone arginines"/>
</dbReference>
<dbReference type="PRO" id="PR:Q1LZ53"/>
<dbReference type="Proteomes" id="UP000002494">
    <property type="component" value="Chromosome 6"/>
</dbReference>
<dbReference type="Bgee" id="ENSRNOG00000026649">
    <property type="expression patterns" value="Expressed in skeletal muscle tissue and 18 other cell types or tissues"/>
</dbReference>
<dbReference type="GO" id="GO:1902494">
    <property type="term" value="C:catalytic complex"/>
    <property type="evidence" value="ECO:0000266"/>
    <property type="project" value="RGD"/>
</dbReference>
<dbReference type="GO" id="GO:0000775">
    <property type="term" value="C:chromosome, centromeric region"/>
    <property type="evidence" value="ECO:0000266"/>
    <property type="project" value="RGD"/>
</dbReference>
<dbReference type="GO" id="GO:0005737">
    <property type="term" value="C:cytoplasm"/>
    <property type="evidence" value="ECO:0000250"/>
    <property type="project" value="UniProtKB"/>
</dbReference>
<dbReference type="GO" id="GO:0000791">
    <property type="term" value="C:euchromatin"/>
    <property type="evidence" value="ECO:0000250"/>
    <property type="project" value="UniProtKB"/>
</dbReference>
<dbReference type="GO" id="GO:0000792">
    <property type="term" value="C:heterochromatin"/>
    <property type="evidence" value="ECO:0000266"/>
    <property type="project" value="RGD"/>
</dbReference>
<dbReference type="GO" id="GO:0016363">
    <property type="term" value="C:nuclear matrix"/>
    <property type="evidence" value="ECO:0000250"/>
    <property type="project" value="UniProtKB"/>
</dbReference>
<dbReference type="GO" id="GO:0005654">
    <property type="term" value="C:nucleoplasm"/>
    <property type="evidence" value="ECO:0007669"/>
    <property type="project" value="Ensembl"/>
</dbReference>
<dbReference type="GO" id="GO:0005634">
    <property type="term" value="C:nucleus"/>
    <property type="evidence" value="ECO:0000314"/>
    <property type="project" value="RGD"/>
</dbReference>
<dbReference type="GO" id="GO:0001741">
    <property type="term" value="C:XY body"/>
    <property type="evidence" value="ECO:0000266"/>
    <property type="project" value="RGD"/>
</dbReference>
<dbReference type="GO" id="GO:0003682">
    <property type="term" value="F:chromatin binding"/>
    <property type="evidence" value="ECO:0000314"/>
    <property type="project" value="RGD"/>
</dbReference>
<dbReference type="GO" id="GO:0003886">
    <property type="term" value="F:DNA (cytosine-5-)-methyltransferase activity"/>
    <property type="evidence" value="ECO:0000250"/>
    <property type="project" value="UniProtKB"/>
</dbReference>
<dbReference type="GO" id="GO:0003677">
    <property type="term" value="F:DNA binding"/>
    <property type="evidence" value="ECO:0000266"/>
    <property type="project" value="RGD"/>
</dbReference>
<dbReference type="GO" id="GO:0042802">
    <property type="term" value="F:identical protein binding"/>
    <property type="evidence" value="ECO:0000266"/>
    <property type="project" value="RGD"/>
</dbReference>
<dbReference type="GO" id="GO:0106222">
    <property type="term" value="F:lncRNA binding"/>
    <property type="evidence" value="ECO:0000266"/>
    <property type="project" value="RGD"/>
</dbReference>
<dbReference type="GO" id="GO:0106363">
    <property type="term" value="F:protein-cysteine methyltransferase activity"/>
    <property type="evidence" value="ECO:0000250"/>
    <property type="project" value="UniProtKB"/>
</dbReference>
<dbReference type="GO" id="GO:0000978">
    <property type="term" value="F:RNA polymerase II cis-regulatory region sequence-specific DNA binding"/>
    <property type="evidence" value="ECO:0000266"/>
    <property type="project" value="RGD"/>
</dbReference>
<dbReference type="GO" id="GO:0061629">
    <property type="term" value="F:RNA polymerase II-specific DNA-binding transcription factor binding"/>
    <property type="evidence" value="ECO:0000266"/>
    <property type="project" value="RGD"/>
</dbReference>
<dbReference type="GO" id="GO:0045322">
    <property type="term" value="F:unmethylated CpG binding"/>
    <property type="evidence" value="ECO:0000266"/>
    <property type="project" value="RGD"/>
</dbReference>
<dbReference type="GO" id="GO:0008270">
    <property type="term" value="F:zinc ion binding"/>
    <property type="evidence" value="ECO:0007669"/>
    <property type="project" value="UniProtKB-KW"/>
</dbReference>
<dbReference type="GO" id="GO:0141068">
    <property type="term" value="P:autosome genomic imprinting"/>
    <property type="evidence" value="ECO:0000266"/>
    <property type="project" value="RGD"/>
</dbReference>
<dbReference type="GO" id="GO:0071230">
    <property type="term" value="P:cellular response to amino acid stimulus"/>
    <property type="evidence" value="ECO:0000266"/>
    <property type="project" value="RGD"/>
</dbReference>
<dbReference type="GO" id="GO:1903926">
    <property type="term" value="P:cellular response to bisphenol A"/>
    <property type="evidence" value="ECO:0000266"/>
    <property type="project" value="RGD"/>
</dbReference>
<dbReference type="GO" id="GO:0071361">
    <property type="term" value="P:cellular response to ethanol"/>
    <property type="evidence" value="ECO:0000270"/>
    <property type="project" value="RGD"/>
</dbReference>
<dbReference type="GO" id="GO:0071456">
    <property type="term" value="P:cellular response to hypoxia"/>
    <property type="evidence" value="ECO:0000270"/>
    <property type="project" value="RGD"/>
</dbReference>
<dbReference type="GO" id="GO:0006346">
    <property type="term" value="P:DNA methylation-dependent constitutive heterochromatin formation"/>
    <property type="evidence" value="ECO:0000266"/>
    <property type="project" value="RGD"/>
</dbReference>
<dbReference type="GO" id="GO:0043045">
    <property type="term" value="P:epigenetic programming of gene expression"/>
    <property type="evidence" value="ECO:0000266"/>
    <property type="project" value="RGD"/>
</dbReference>
<dbReference type="GO" id="GO:0071514">
    <property type="term" value="P:genomic imprinting"/>
    <property type="evidence" value="ECO:0000266"/>
    <property type="project" value="RGD"/>
</dbReference>
<dbReference type="GO" id="GO:0097284">
    <property type="term" value="P:hepatocyte apoptotic process"/>
    <property type="evidence" value="ECO:0000270"/>
    <property type="project" value="RGD"/>
</dbReference>
<dbReference type="GO" id="GO:0031507">
    <property type="term" value="P:heterochromatin formation"/>
    <property type="evidence" value="ECO:0000266"/>
    <property type="project" value="RGD"/>
</dbReference>
<dbReference type="GO" id="GO:0032259">
    <property type="term" value="P:methylation"/>
    <property type="evidence" value="ECO:0007669"/>
    <property type="project" value="UniProtKB-KW"/>
</dbReference>
<dbReference type="GO" id="GO:0045892">
    <property type="term" value="P:negative regulation of DNA-templated transcription"/>
    <property type="evidence" value="ECO:0000318"/>
    <property type="project" value="GO_Central"/>
</dbReference>
<dbReference type="GO" id="GO:0044027">
    <property type="term" value="P:negative regulation of gene expression via chromosomal CpG island methylation"/>
    <property type="evidence" value="ECO:0000250"/>
    <property type="project" value="UniProtKB"/>
</dbReference>
<dbReference type="GO" id="GO:0000122">
    <property type="term" value="P:negative regulation of transcription by RNA polymerase II"/>
    <property type="evidence" value="ECO:0000266"/>
    <property type="project" value="RGD"/>
</dbReference>
<dbReference type="GO" id="GO:0030182">
    <property type="term" value="P:neuron differentiation"/>
    <property type="evidence" value="ECO:0000270"/>
    <property type="project" value="RGD"/>
</dbReference>
<dbReference type="GO" id="GO:1900039">
    <property type="term" value="P:positive regulation of cellular response to hypoxia"/>
    <property type="evidence" value="ECO:0000315"/>
    <property type="project" value="RGD"/>
</dbReference>
<dbReference type="GO" id="GO:0009791">
    <property type="term" value="P:post-embryonic development"/>
    <property type="evidence" value="ECO:0000266"/>
    <property type="project" value="RGD"/>
</dbReference>
<dbReference type="GO" id="GO:0031048">
    <property type="term" value="P:regulatory ncRNA-mediated heterochromatin formation"/>
    <property type="evidence" value="ECO:0000266"/>
    <property type="project" value="RGD"/>
</dbReference>
<dbReference type="GO" id="GO:0042220">
    <property type="term" value="P:response to cocaine"/>
    <property type="evidence" value="ECO:0000270"/>
    <property type="project" value="RGD"/>
</dbReference>
<dbReference type="GO" id="GO:0032355">
    <property type="term" value="P:response to estradiol"/>
    <property type="evidence" value="ECO:0000270"/>
    <property type="project" value="RGD"/>
</dbReference>
<dbReference type="GO" id="GO:0045471">
    <property type="term" value="P:response to ethanol"/>
    <property type="evidence" value="ECO:0000270"/>
    <property type="project" value="RGD"/>
</dbReference>
<dbReference type="GO" id="GO:0010212">
    <property type="term" value="P:response to ionizing radiation"/>
    <property type="evidence" value="ECO:0000270"/>
    <property type="project" value="RGD"/>
</dbReference>
<dbReference type="GO" id="GO:0010288">
    <property type="term" value="P:response to lead ion"/>
    <property type="evidence" value="ECO:0000270"/>
    <property type="project" value="RGD"/>
</dbReference>
<dbReference type="GO" id="GO:0031667">
    <property type="term" value="P:response to nutrient levels"/>
    <property type="evidence" value="ECO:0000270"/>
    <property type="project" value="RGD"/>
</dbReference>
<dbReference type="GO" id="GO:0009636">
    <property type="term" value="P:response to toxic substance"/>
    <property type="evidence" value="ECO:0000270"/>
    <property type="project" value="RGD"/>
</dbReference>
<dbReference type="GO" id="GO:0033189">
    <property type="term" value="P:response to vitamin A"/>
    <property type="evidence" value="ECO:0000270"/>
    <property type="project" value="RGD"/>
</dbReference>
<dbReference type="GO" id="GO:0009410">
    <property type="term" value="P:response to xenobiotic stimulus"/>
    <property type="evidence" value="ECO:0000270"/>
    <property type="project" value="RGD"/>
</dbReference>
<dbReference type="GO" id="GO:0007283">
    <property type="term" value="P:spermatogenesis"/>
    <property type="evidence" value="ECO:0000266"/>
    <property type="project" value="RGD"/>
</dbReference>
<dbReference type="GO" id="GO:0141196">
    <property type="term" value="P:transposable element silencing by piRNA-mediated DNA methylation"/>
    <property type="evidence" value="ECO:0000266"/>
    <property type="project" value="RGD"/>
</dbReference>
<dbReference type="CDD" id="cd11729">
    <property type="entry name" value="ADDz_Dnmt3a"/>
    <property type="match status" value="1"/>
</dbReference>
<dbReference type="CDD" id="cd20154">
    <property type="entry name" value="PWWP_DNMT3A"/>
    <property type="match status" value="1"/>
</dbReference>
<dbReference type="FunFam" id="3.40.50.150:FF:000008">
    <property type="entry name" value="DNA (Cytosine-5)-methyltransferase 3A isoform X1"/>
    <property type="match status" value="1"/>
</dbReference>
<dbReference type="FunFam" id="2.30.30.140:FF:000006">
    <property type="entry name" value="DNA (Cytosine-5)-methyltransferase 3B isoform 3"/>
    <property type="match status" value="1"/>
</dbReference>
<dbReference type="FunFam" id="1.10.720.50:FF:000002">
    <property type="entry name" value="DNA methyltransferase 3 alpha"/>
    <property type="match status" value="1"/>
</dbReference>
<dbReference type="FunFam" id="3.40.50.150:FF:000011">
    <property type="entry name" value="DNA methyltransferase 3 alpha"/>
    <property type="match status" value="1"/>
</dbReference>
<dbReference type="Gene3D" id="2.30.30.140">
    <property type="match status" value="1"/>
</dbReference>
<dbReference type="Gene3D" id="1.10.720.50">
    <property type="entry name" value="PWWP, helical domain"/>
    <property type="match status" value="1"/>
</dbReference>
<dbReference type="Gene3D" id="3.40.50.150">
    <property type="entry name" value="Vaccinia Virus protein VP39"/>
    <property type="match status" value="2"/>
</dbReference>
<dbReference type="InterPro" id="IPR025766">
    <property type="entry name" value="ADD"/>
</dbReference>
<dbReference type="InterPro" id="IPR044108">
    <property type="entry name" value="ADD_DNMT3A"/>
</dbReference>
<dbReference type="InterPro" id="IPR018117">
    <property type="entry name" value="C5_DNA_meth_AS"/>
</dbReference>
<dbReference type="InterPro" id="IPR001525">
    <property type="entry name" value="C5_MeTfrase"/>
</dbReference>
<dbReference type="InterPro" id="IPR054724">
    <property type="entry name" value="DNM3A_N"/>
</dbReference>
<dbReference type="InterPro" id="IPR040552">
    <property type="entry name" value="DNMT3_ADD_GATA1-like"/>
</dbReference>
<dbReference type="InterPro" id="IPR049554">
    <property type="entry name" value="DNMT3_ADD_PHD"/>
</dbReference>
<dbReference type="InterPro" id="IPR000313">
    <property type="entry name" value="PWWP_dom"/>
</dbReference>
<dbReference type="InterPro" id="IPR029063">
    <property type="entry name" value="SAM-dependent_MTases_sf"/>
</dbReference>
<dbReference type="PANTHER" id="PTHR23068:SF10">
    <property type="entry name" value="DNA (CYTOSINE-5)-METHYLTRANSFERASE 3A"/>
    <property type="match status" value="1"/>
</dbReference>
<dbReference type="PANTHER" id="PTHR23068">
    <property type="entry name" value="DNA CYTOSINE-5- -METHYLTRANSFERASE 3-RELATED"/>
    <property type="match status" value="1"/>
</dbReference>
<dbReference type="Pfam" id="PF17980">
    <property type="entry name" value="ADD_DNMT3"/>
    <property type="match status" value="1"/>
</dbReference>
<dbReference type="Pfam" id="PF00145">
    <property type="entry name" value="DNA_methylase"/>
    <property type="match status" value="1"/>
</dbReference>
<dbReference type="Pfam" id="PF22855">
    <property type="entry name" value="DNM3A_N"/>
    <property type="match status" value="1"/>
</dbReference>
<dbReference type="Pfam" id="PF21255">
    <property type="entry name" value="DNMT3_ADD_GATA1-like"/>
    <property type="match status" value="1"/>
</dbReference>
<dbReference type="Pfam" id="PF00855">
    <property type="entry name" value="PWWP"/>
    <property type="match status" value="1"/>
</dbReference>
<dbReference type="SMART" id="SM00293">
    <property type="entry name" value="PWWP"/>
    <property type="match status" value="1"/>
</dbReference>
<dbReference type="SUPFAM" id="SSF53335">
    <property type="entry name" value="S-adenosyl-L-methionine-dependent methyltransferases"/>
    <property type="match status" value="1"/>
</dbReference>
<dbReference type="SUPFAM" id="SSF63748">
    <property type="entry name" value="Tudor/PWWP/MBT"/>
    <property type="match status" value="1"/>
</dbReference>
<dbReference type="PROSITE" id="PS51533">
    <property type="entry name" value="ADD"/>
    <property type="match status" value="1"/>
</dbReference>
<dbReference type="PROSITE" id="PS00094">
    <property type="entry name" value="C5_MTASE_1"/>
    <property type="match status" value="1"/>
</dbReference>
<dbReference type="PROSITE" id="PS50812">
    <property type="entry name" value="PWWP"/>
    <property type="match status" value="1"/>
</dbReference>
<dbReference type="PROSITE" id="PS51679">
    <property type="entry name" value="SAM_MT_C5"/>
    <property type="match status" value="1"/>
</dbReference>
<organism>
    <name type="scientific">Rattus norvegicus</name>
    <name type="common">Rat</name>
    <dbReference type="NCBI Taxonomy" id="10116"/>
    <lineage>
        <taxon>Eukaryota</taxon>
        <taxon>Metazoa</taxon>
        <taxon>Chordata</taxon>
        <taxon>Craniata</taxon>
        <taxon>Vertebrata</taxon>
        <taxon>Euteleostomi</taxon>
        <taxon>Mammalia</taxon>
        <taxon>Eutheria</taxon>
        <taxon>Euarchontoglires</taxon>
        <taxon>Glires</taxon>
        <taxon>Rodentia</taxon>
        <taxon>Myomorpha</taxon>
        <taxon>Muroidea</taxon>
        <taxon>Muridae</taxon>
        <taxon>Murinae</taxon>
        <taxon>Rattus</taxon>
    </lineage>
</organism>
<accession>Q1LZ53</accession>
<accession>Q1LZ52</accession>
<gene>
    <name type="primary">Dnmt3a</name>
</gene>
<name>DNM3A_RAT</name>
<keyword id="KW-0877">Alternative promoter usage</keyword>
<keyword id="KW-0156">Chromatin regulator</keyword>
<keyword id="KW-0158">Chromosome</keyword>
<keyword id="KW-0963">Cytoplasm</keyword>
<keyword id="KW-0238">DNA-binding</keyword>
<keyword id="KW-1017">Isopeptide bond</keyword>
<keyword id="KW-0479">Metal-binding</keyword>
<keyword id="KW-0488">Methylation</keyword>
<keyword id="KW-0489">Methyltransferase</keyword>
<keyword id="KW-0539">Nucleus</keyword>
<keyword id="KW-0597">Phosphoprotein</keyword>
<keyword id="KW-1185">Reference proteome</keyword>
<keyword id="KW-0678">Repressor</keyword>
<keyword id="KW-0949">S-adenosyl-L-methionine</keyword>
<keyword id="KW-0804">Transcription</keyword>
<keyword id="KW-0805">Transcription regulation</keyword>
<keyword id="KW-0808">Transferase</keyword>
<keyword id="KW-0832">Ubl conjugation</keyword>
<keyword id="KW-0862">Zinc</keyword>
<keyword id="KW-0863">Zinc-finger</keyword>
<evidence type="ECO:0000250" key="1"/>
<evidence type="ECO:0000250" key="2">
    <source>
        <dbReference type="UniProtKB" id="O88508"/>
    </source>
</evidence>
<evidence type="ECO:0000250" key="3">
    <source>
        <dbReference type="UniProtKB" id="Q9Y6K1"/>
    </source>
</evidence>
<evidence type="ECO:0000255" key="4">
    <source>
        <dbReference type="PROSITE-ProRule" id="PRU00162"/>
    </source>
</evidence>
<evidence type="ECO:0000255" key="5">
    <source>
        <dbReference type="PROSITE-ProRule" id="PRU00865"/>
    </source>
</evidence>
<evidence type="ECO:0000255" key="6">
    <source>
        <dbReference type="PROSITE-ProRule" id="PRU01016"/>
    </source>
</evidence>
<evidence type="ECO:0000255" key="7">
    <source>
        <dbReference type="PROSITE-ProRule" id="PRU10018"/>
    </source>
</evidence>
<evidence type="ECO:0000256" key="8">
    <source>
        <dbReference type="SAM" id="MobiDB-lite"/>
    </source>
</evidence>
<evidence type="ECO:0000303" key="9">
    <source>
    </source>
</evidence>
<evidence type="ECO:0000305" key="10"/>
<evidence type="ECO:0007744" key="11">
    <source>
    </source>
</evidence>
<feature type="chain" id="PRO_0000313030" description="DNA (cytosine-5)-methyltransferase 3A">
    <location>
        <begin position="1"/>
        <end position="908"/>
    </location>
</feature>
<feature type="domain" description="PWWP" evidence="4">
    <location>
        <begin position="257"/>
        <end position="315"/>
    </location>
</feature>
<feature type="domain" description="ADD" evidence="5">
    <location>
        <begin position="478"/>
        <end position="610"/>
    </location>
</feature>
<feature type="domain" description="SAM-dependent MTase C5-type" evidence="6">
    <location>
        <begin position="630"/>
        <end position="908"/>
    </location>
</feature>
<feature type="zinc finger region" description="GATA-type; atypical" evidence="5">
    <location>
        <begin position="489"/>
        <end position="519"/>
    </location>
</feature>
<feature type="zinc finger region" description="PHD-type; atypical" evidence="5">
    <location>
        <begin position="530"/>
        <end position="586"/>
    </location>
</feature>
<feature type="region of interest" description="Disordered" evidence="8">
    <location>
        <begin position="1"/>
        <end position="183"/>
    </location>
</feature>
<feature type="region of interest" description="Interaction with DNMT1 and DNMT3B" evidence="1">
    <location>
        <begin position="195"/>
        <end position="399"/>
    </location>
</feature>
<feature type="region of interest" description="Disordered" evidence="8">
    <location>
        <begin position="226"/>
        <end position="281"/>
    </location>
</feature>
<feature type="region of interest" description="Disordered" evidence="8">
    <location>
        <begin position="443"/>
        <end position="462"/>
    </location>
</feature>
<feature type="region of interest" description="Interaction with the PRC2/EED-EZH2 complex" evidence="1">
    <location>
        <begin position="490"/>
        <end position="582"/>
    </location>
</feature>
<feature type="compositionally biased region" description="Polar residues" evidence="8">
    <location>
        <begin position="1"/>
        <end position="13"/>
    </location>
</feature>
<feature type="compositionally biased region" description="Basic and acidic residues" evidence="8">
    <location>
        <begin position="14"/>
        <end position="37"/>
    </location>
</feature>
<feature type="compositionally biased region" description="Basic residues" evidence="8">
    <location>
        <begin position="44"/>
        <end position="54"/>
    </location>
</feature>
<feature type="compositionally biased region" description="Polar residues" evidence="8">
    <location>
        <begin position="69"/>
        <end position="80"/>
    </location>
</feature>
<feature type="compositionally biased region" description="Low complexity" evidence="8">
    <location>
        <begin position="110"/>
        <end position="124"/>
    </location>
</feature>
<feature type="compositionally biased region" description="Polar residues" evidence="8">
    <location>
        <begin position="242"/>
        <end position="256"/>
    </location>
</feature>
<feature type="compositionally biased region" description="Basic and acidic residues" evidence="8">
    <location>
        <begin position="265"/>
        <end position="275"/>
    </location>
</feature>
<feature type="active site" evidence="6 7">
    <location>
        <position position="706"/>
    </location>
</feature>
<feature type="binding site" evidence="3">
    <location>
        <begin position="637"/>
        <end position="641"/>
    </location>
    <ligand>
        <name>S-adenosyl-L-methionine</name>
        <dbReference type="ChEBI" id="CHEBI:59789"/>
    </ligand>
</feature>
<feature type="binding site" evidence="3">
    <location>
        <position position="660"/>
    </location>
    <ligand>
        <name>S-adenosyl-L-methionine</name>
        <dbReference type="ChEBI" id="CHEBI:59789"/>
    </ligand>
</feature>
<feature type="binding site" evidence="3">
    <location>
        <begin position="682"/>
        <end position="684"/>
    </location>
    <ligand>
        <name>S-adenosyl-L-methionine</name>
        <dbReference type="ChEBI" id="CHEBI:59789"/>
    </ligand>
</feature>
<feature type="binding site" evidence="3">
    <location>
        <begin position="887"/>
        <end position="889"/>
    </location>
    <ligand>
        <name>S-adenosyl-L-methionine</name>
        <dbReference type="ChEBI" id="CHEBI:59789"/>
    </ligand>
</feature>
<feature type="modified residue" description="Phosphoserine" evidence="11">
    <location>
        <position position="102"/>
    </location>
</feature>
<feature type="modified residue" description="Phosphothreonine" evidence="11">
    <location>
        <position position="120"/>
    </location>
</feature>
<feature type="modified residue" description="Omega-N-methylarginine" evidence="2">
    <location>
        <position position="167"/>
    </location>
</feature>
<feature type="modified residue" description="Phosphoserine" evidence="11">
    <location>
        <position position="239"/>
    </location>
</feature>
<feature type="modified residue" description="Phosphoserine" evidence="11">
    <location>
        <position position="251"/>
    </location>
</feature>
<feature type="modified residue" description="Phosphothreonine" evidence="3">
    <location>
        <position position="257"/>
    </location>
</feature>
<feature type="modified residue" description="Phosphoserine" evidence="2">
    <location>
        <position position="386"/>
    </location>
</feature>
<feature type="modified residue" description="Phosphoserine" evidence="2">
    <location>
        <position position="389"/>
    </location>
</feature>
<feature type="modified residue" description="S-methylcysteine; by autocatalysis" evidence="2">
    <location>
        <position position="706"/>
    </location>
</feature>
<feature type="cross-link" description="Glycyl lysine isopeptide (Lys-Gly) (interchain with G-Cter in SUMO2)" evidence="3">
    <location>
        <position position="158"/>
    </location>
</feature>
<feature type="splice variant" id="VSP_029986" description="In isoform 2." evidence="9">
    <location>
        <begin position="1"/>
        <end position="219"/>
    </location>
</feature>
<proteinExistence type="evidence at protein level"/>
<comment type="function">
    <text evidence="2">Required for genome-wide de novo methylation and is essential for the establishment of DNA methylation patterns during development. DNA methylation is coordinated with methylation of histones. It modifies DNA in a non-processive manner and also methylates non-CpG sites. May preferentially methylate DNA linker between 2 nucleosomal cores and is inhibited by histone H1. Plays a role in paternal and maternal imprinting. Required for methylation of most imprinted loci in germ cells. Acts as a transcriptional corepressor for ZBTB18. Recruited to trimethylated 'Lys-36' of histone H3 (H3K36me3) sites. Can actively repress transcription through the recruitment of HDAC activity (By similarity). Also has weak auto-methylation activity on Cys-706 in absence of DNA (By similarity).</text>
</comment>
<comment type="catalytic activity">
    <reaction evidence="2 7">
        <text>a 2'-deoxycytidine in DNA + S-adenosyl-L-methionine = a 5-methyl-2'-deoxycytidine in DNA + S-adenosyl-L-homocysteine + H(+)</text>
        <dbReference type="Rhea" id="RHEA:13681"/>
        <dbReference type="Rhea" id="RHEA-COMP:11369"/>
        <dbReference type="Rhea" id="RHEA-COMP:11370"/>
        <dbReference type="ChEBI" id="CHEBI:15378"/>
        <dbReference type="ChEBI" id="CHEBI:57856"/>
        <dbReference type="ChEBI" id="CHEBI:59789"/>
        <dbReference type="ChEBI" id="CHEBI:85452"/>
        <dbReference type="ChEBI" id="CHEBI:85454"/>
        <dbReference type="EC" id="2.1.1.37"/>
    </reaction>
    <physiologicalReaction direction="left-to-right" evidence="2">
        <dbReference type="Rhea" id="RHEA:13682"/>
    </physiologicalReaction>
</comment>
<comment type="catalytic activity">
    <reaction evidence="2">
        <text>L-cysteinyl-[protein] + S-adenosyl-L-methionine = S-methyl-L-cysteinyl-[protein] + S-adenosyl-L-homocysteine + H(+)</text>
        <dbReference type="Rhea" id="RHEA:66544"/>
        <dbReference type="Rhea" id="RHEA-COMP:10131"/>
        <dbReference type="Rhea" id="RHEA-COMP:10132"/>
        <dbReference type="ChEBI" id="CHEBI:15378"/>
        <dbReference type="ChEBI" id="CHEBI:29950"/>
        <dbReference type="ChEBI" id="CHEBI:57856"/>
        <dbReference type="ChEBI" id="CHEBI:59789"/>
        <dbReference type="ChEBI" id="CHEBI:82612"/>
    </reaction>
    <physiologicalReaction direction="left-to-right" evidence="2">
        <dbReference type="Rhea" id="RHEA:66545"/>
    </physiologicalReaction>
</comment>
<comment type="activity regulation">
    <text evidence="2">Activated by binding to the regulatory factor DNMT3L. Auto-methylation at Cys-706 in absence of DNA inactivates the DNA methyltransferase activity.</text>
</comment>
<comment type="subunit">
    <text evidence="2 3">Heterotetramer composed of 1 DNMT3A homodimer and 2 DNMT3L subunits (DNMT3L-DNMT3A-DNMT3A-DNMT3L) (By similarity). Interacts with DNMT1 and DNMT3B (By similarity). Interacts with MPHOSPH8 (By similarity). Interacts with histone H3 that is not methylated at 'Lys-4' (H3K4) (By similarity). Binds the ZBTB18 transcriptional repressor (By similarity). Interacts with SETDB1 (By similarity). Associates with HDAC1 through its ADD domain. Interacts with UHRF1. Interacts with the PRC2/EED-EZH2 complex. Interacts with UBC9, PIAS1 and PIAS2. Interacts with SPOCD1 (By similarity). Interacts with ZNF263; recruited to the SIX3 promoter along with other proteins involved in chromatin modification and transcriptional corepression where it contributes to transcriptional repression (By similarity).</text>
</comment>
<comment type="subcellular location">
    <subcellularLocation>
        <location evidence="3">Nucleus</location>
    </subcellularLocation>
    <subcellularLocation>
        <location evidence="3">Chromosome</location>
    </subcellularLocation>
    <subcellularLocation>
        <location evidence="3">Cytoplasm</location>
    </subcellularLocation>
    <text evidence="2">Accumulates in the major satellite repeats at pericentric heterochromatin.</text>
</comment>
<comment type="alternative products">
    <event type="alternative promoter"/>
    <isoform>
        <id>Q1LZ53-1</id>
        <name>1</name>
        <sequence type="displayed"/>
    </isoform>
    <isoform>
        <id>Q1LZ53-2</id>
        <name>2</name>
        <sequence type="described" ref="VSP_029986"/>
    </isoform>
</comment>
<comment type="domain">
    <text evidence="2">The PWWP domain is essential for targeting to pericentric heterochromatin. It specifically recognizes and binds trimethylated 'Lys-36' of histone H3 (H3K36me3).</text>
</comment>
<comment type="PTM">
    <text evidence="2">Sumoylated; sumoylation disrupts the ability to interact with histone deacetylases (HDAC1 and HDAC2) and repress transcription.</text>
</comment>
<comment type="PTM">
    <text evidence="2">Auto-methylated at Cys-706: auto-methylation takes place in absence of DNA substrate and inactivates the DNA methyltransferase activity. Inactivation by auto-methylation may be used to inactivate unused DNA methyltransferases in the cell.</text>
</comment>
<comment type="similarity">
    <text evidence="6">Belongs to the class I-like SAM-binding methyltransferase superfamily. C5-methyltransferase family.</text>
</comment>